<reference key="1">
    <citation type="journal article" date="2001" name="Biosci. Biotechnol. Biochem.">
        <title>Cloning and characterization of a chitosanase gene from the koji mold Aspergillus oryzae strain IAM 2660.</title>
        <authorList>
            <person name="Zhang X.Y."/>
            <person name="Dai A.L."/>
            <person name="Kuroiwa K."/>
            <person name="Kodaira R."/>
            <person name="Nogawa M."/>
            <person name="Shimosaka M."/>
            <person name="Okazaki M."/>
        </authorList>
    </citation>
    <scope>NUCLEOTIDE SEQUENCE [GENOMIC DNA]</scope>
    <scope>FUNCTION</scope>
    <scope>CATALYTIC ACTIVITY</scope>
    <source>
        <strain>IAM2660</strain>
    </source>
</reference>
<feature type="signal peptide" evidence="2">
    <location>
        <begin position="1"/>
        <end position="17"/>
    </location>
</feature>
<feature type="chain" id="PRO_0000429635" description="Endo-chitosanase">
    <location>
        <begin position="18"/>
        <end position="245"/>
    </location>
</feature>
<protein>
    <recommendedName>
        <fullName>Endo-chitosanase</fullName>
        <ecNumber>3.2.1.132</ecNumber>
    </recommendedName>
</protein>
<proteinExistence type="evidence at protein level"/>
<accession>Q9P961</accession>
<dbReference type="EC" id="3.2.1.132"/>
<dbReference type="EMBL" id="AB038996">
    <property type="protein sequence ID" value="BAA92250.1"/>
    <property type="molecule type" value="Genomic_DNA"/>
</dbReference>
<dbReference type="PIR" id="JC7659">
    <property type="entry name" value="JC7659"/>
</dbReference>
<dbReference type="CAZy" id="GH75">
    <property type="family name" value="Glycoside Hydrolase Family 75"/>
</dbReference>
<dbReference type="EnsemblFungi" id="BAE63840">
    <property type="protein sequence ID" value="BAE63840"/>
    <property type="gene ID" value="AO090020000697"/>
</dbReference>
<dbReference type="VEuPathDB" id="FungiDB:AO090020000697"/>
<dbReference type="eggNOG" id="ENOG502S39Y">
    <property type="taxonomic scope" value="Eukaryota"/>
</dbReference>
<dbReference type="OMA" id="KLCFPNE"/>
<dbReference type="GO" id="GO:0005576">
    <property type="term" value="C:extracellular region"/>
    <property type="evidence" value="ECO:0007669"/>
    <property type="project" value="UniProtKB-SubCell"/>
</dbReference>
<dbReference type="GO" id="GO:0016977">
    <property type="term" value="F:chitosanase activity"/>
    <property type="evidence" value="ECO:0007669"/>
    <property type="project" value="UniProtKB-EC"/>
</dbReference>
<dbReference type="GO" id="GO:0000272">
    <property type="term" value="P:polysaccharide catabolic process"/>
    <property type="evidence" value="ECO:0007669"/>
    <property type="project" value="UniProtKB-KW"/>
</dbReference>
<dbReference type="InterPro" id="IPR009939">
    <property type="entry name" value="Chitosanase_fungal"/>
</dbReference>
<dbReference type="PANTHER" id="PTHR42061">
    <property type="entry name" value="ENDO-CHITOSANASE"/>
    <property type="match status" value="1"/>
</dbReference>
<dbReference type="PANTHER" id="PTHR42061:SF9">
    <property type="entry name" value="ENDO-CHITOSANASE"/>
    <property type="match status" value="1"/>
</dbReference>
<dbReference type="Pfam" id="PF07335">
    <property type="entry name" value="Glyco_hydro_75"/>
    <property type="match status" value="1"/>
</dbReference>
<organism>
    <name type="scientific">Aspergillus oryzae</name>
    <name type="common">Yellow koji mold</name>
    <dbReference type="NCBI Taxonomy" id="5062"/>
    <lineage>
        <taxon>Eukaryota</taxon>
        <taxon>Fungi</taxon>
        <taxon>Dikarya</taxon>
        <taxon>Ascomycota</taxon>
        <taxon>Pezizomycotina</taxon>
        <taxon>Eurotiomycetes</taxon>
        <taxon>Eurotiomycetidae</taxon>
        <taxon>Eurotiales</taxon>
        <taxon>Aspergillaceae</taxon>
        <taxon>Aspergillus</taxon>
        <taxon>Aspergillus subgen. Circumdati</taxon>
    </lineage>
</organism>
<keyword id="KW-0119">Carbohydrate metabolism</keyword>
<keyword id="KW-0326">Glycosidase</keyword>
<keyword id="KW-0378">Hydrolase</keyword>
<keyword id="KW-0624">Polysaccharide degradation</keyword>
<keyword id="KW-0964">Secreted</keyword>
<keyword id="KW-0732">Signal</keyword>
<evidence type="ECO:0000250" key="1"/>
<evidence type="ECO:0000255" key="2"/>
<evidence type="ECO:0000269" key="3">
    <source>
    </source>
</evidence>
<evidence type="ECO:0000305" key="4"/>
<sequence>MHFAGIVAIALATGATAYDLPENLKQIYEKHKSGKCSKELQGGYDNGHSHDGKSFSYCGDIPNAIYLHSSKNGGQYADMDIDCDGANRHAGKCSNDHSGQGETRWKDEVQKLGIDDLDANIHPYVVFGNENDDGDDPEFDPRKHGMEPLSVMAVVCNKKLFYGIWGDTNGHTATGEASLSMAELCFPEEDPSGDSGHEPNDVLYIGFTGKEAVPGKSADWKADSTESFEESIKELGDKLVAGLKA</sequence>
<name>CSN_ASPOZ</name>
<comment type="function">
    <text evidence="3">Chitosanase catalyzing the endo-type cleavage of chitosan, the deacylated form of chitin. Chitosanase may be crucial in the degradation of the deacetylated portion of chitin in the fungal cell wall. Chitoolisaccharides produced by the hydrolysis of partially N-acetylated chitosan are known to have many biological activities, including antibacterial activity, immune-enhancing effects, and elicitor activity.</text>
</comment>
<comment type="catalytic activity">
    <reaction evidence="3">
        <text>Endohydrolysis of beta-(1-&gt;4)-linkages between D-glucosamine residues in a partly acetylated chitosan.</text>
        <dbReference type="EC" id="3.2.1.132"/>
    </reaction>
</comment>
<comment type="subcellular location">
    <subcellularLocation>
        <location evidence="1">Secreted</location>
    </subcellularLocation>
</comment>
<comment type="similarity">
    <text evidence="4">Belongs to the glycosyl hydrolase 75 family.</text>
</comment>
<gene>
    <name type="primary">csn</name>
    <name type="synonym">csnA</name>
</gene>